<sequence>MDTIIDAIASLPQDTLIVAVLYLGLSLLYLLIIPGFVYFYLNSRWYVASSFERAFMYFLMFFFFPGVLLLSPFLNFRPKRRQVNS</sequence>
<dbReference type="EC" id="7.1.1.-" evidence="1"/>
<dbReference type="EMBL" id="CP000806">
    <property type="protein sequence ID" value="ACB51478.1"/>
    <property type="molecule type" value="Genomic_DNA"/>
</dbReference>
<dbReference type="RefSeq" id="WP_009546880.1">
    <property type="nucleotide sequence ID" value="NC_010546.1"/>
</dbReference>
<dbReference type="SMR" id="B1WNP9"/>
<dbReference type="STRING" id="43989.cce_2128"/>
<dbReference type="KEGG" id="cyt:cce_2128"/>
<dbReference type="eggNOG" id="ENOG5032ZM4">
    <property type="taxonomic scope" value="Bacteria"/>
</dbReference>
<dbReference type="HOGENOM" id="CLU_171077_0_0_3"/>
<dbReference type="Proteomes" id="UP000001203">
    <property type="component" value="Chromosome circular"/>
</dbReference>
<dbReference type="GO" id="GO:0031676">
    <property type="term" value="C:plasma membrane-derived thylakoid membrane"/>
    <property type="evidence" value="ECO:0007669"/>
    <property type="project" value="UniProtKB-SubCell"/>
</dbReference>
<dbReference type="GO" id="GO:0016655">
    <property type="term" value="F:oxidoreductase activity, acting on NAD(P)H, quinone or similar compound as acceptor"/>
    <property type="evidence" value="ECO:0007669"/>
    <property type="project" value="UniProtKB-UniRule"/>
</dbReference>
<dbReference type="GO" id="GO:0048038">
    <property type="term" value="F:quinone binding"/>
    <property type="evidence" value="ECO:0007669"/>
    <property type="project" value="UniProtKB-KW"/>
</dbReference>
<dbReference type="HAMAP" id="MF_01355">
    <property type="entry name" value="NDH1_NDH1L"/>
    <property type="match status" value="1"/>
</dbReference>
<dbReference type="InterPro" id="IPR019654">
    <property type="entry name" value="NADH-quinone_OxRdatse_su_L"/>
</dbReference>
<dbReference type="PANTHER" id="PTHR36727">
    <property type="entry name" value="NAD(P)H-QUINONE OXIDOREDUCTASE SUBUNIT L, CHLOROPLASTIC"/>
    <property type="match status" value="1"/>
</dbReference>
<dbReference type="PANTHER" id="PTHR36727:SF2">
    <property type="entry name" value="NAD(P)H-QUINONE OXIDOREDUCTASE SUBUNIT L, CHLOROPLASTIC"/>
    <property type="match status" value="1"/>
</dbReference>
<dbReference type="Pfam" id="PF10716">
    <property type="entry name" value="NdhL"/>
    <property type="match status" value="1"/>
</dbReference>
<proteinExistence type="inferred from homology"/>
<protein>
    <recommendedName>
        <fullName evidence="1">NAD(P)H-quinone oxidoreductase subunit L</fullName>
        <ecNumber evidence="1">7.1.1.-</ecNumber>
    </recommendedName>
    <alternativeName>
        <fullName evidence="1">NAD(P)H dehydrogenase I subunit L</fullName>
    </alternativeName>
    <alternativeName>
        <fullName>NDH-1 subunit L</fullName>
    </alternativeName>
    <alternativeName>
        <fullName>NDH-L</fullName>
    </alternativeName>
</protein>
<accession>B1WNP9</accession>
<reference key="1">
    <citation type="journal article" date="2008" name="Proc. Natl. Acad. Sci. U.S.A.">
        <title>The genome of Cyanothece 51142, a unicellular diazotrophic cyanobacterium important in the marine nitrogen cycle.</title>
        <authorList>
            <person name="Welsh E.A."/>
            <person name="Liberton M."/>
            <person name="Stoeckel J."/>
            <person name="Loh T."/>
            <person name="Elvitigala T."/>
            <person name="Wang C."/>
            <person name="Wollam A."/>
            <person name="Fulton R.S."/>
            <person name="Clifton S.W."/>
            <person name="Jacobs J.M."/>
            <person name="Aurora R."/>
            <person name="Ghosh B.K."/>
            <person name="Sherman L.A."/>
            <person name="Smith R.D."/>
            <person name="Wilson R.K."/>
            <person name="Pakrasi H.B."/>
        </authorList>
    </citation>
    <scope>NUCLEOTIDE SEQUENCE [LARGE SCALE GENOMIC DNA]</scope>
    <source>
        <strain>ATCC 51142 / BH68</strain>
    </source>
</reference>
<name>NDHL_CROS5</name>
<organism>
    <name type="scientific">Crocosphaera subtropica (strain ATCC 51142 / BH68)</name>
    <name type="common">Cyanothece sp. (strain ATCC 51142)</name>
    <dbReference type="NCBI Taxonomy" id="43989"/>
    <lineage>
        <taxon>Bacteria</taxon>
        <taxon>Bacillati</taxon>
        <taxon>Cyanobacteriota</taxon>
        <taxon>Cyanophyceae</taxon>
        <taxon>Oscillatoriophycideae</taxon>
        <taxon>Chroococcales</taxon>
        <taxon>Aphanothecaceae</taxon>
        <taxon>Crocosphaera</taxon>
        <taxon>Crocosphaera subtropica</taxon>
    </lineage>
</organism>
<feature type="chain" id="PRO_0000353668" description="NAD(P)H-quinone oxidoreductase subunit L">
    <location>
        <begin position="1"/>
        <end position="85"/>
    </location>
</feature>
<feature type="transmembrane region" description="Helical" evidence="1">
    <location>
        <begin position="17"/>
        <end position="37"/>
    </location>
</feature>
<feature type="transmembrane region" description="Helical" evidence="1">
    <location>
        <begin position="54"/>
        <end position="74"/>
    </location>
</feature>
<evidence type="ECO:0000255" key="1">
    <source>
        <dbReference type="HAMAP-Rule" id="MF_01355"/>
    </source>
</evidence>
<keyword id="KW-0472">Membrane</keyword>
<keyword id="KW-0520">NAD</keyword>
<keyword id="KW-0521">NADP</keyword>
<keyword id="KW-0618">Plastoquinone</keyword>
<keyword id="KW-0874">Quinone</keyword>
<keyword id="KW-1185">Reference proteome</keyword>
<keyword id="KW-0793">Thylakoid</keyword>
<keyword id="KW-1278">Translocase</keyword>
<keyword id="KW-0812">Transmembrane</keyword>
<keyword id="KW-1133">Transmembrane helix</keyword>
<keyword id="KW-0813">Transport</keyword>
<gene>
    <name evidence="1" type="primary">ndhL</name>
    <name type="ordered locus">cce_2128</name>
</gene>
<comment type="function">
    <text evidence="1">NDH-1 shuttles electrons from an unknown electron donor, via FMN and iron-sulfur (Fe-S) centers, to quinones in the respiratory and/or the photosynthetic chain. The immediate electron acceptor for the enzyme in this species is believed to be plastoquinone. Couples the redox reaction to proton translocation, and thus conserves the redox energy in a proton gradient. Cyanobacterial NDH-1 also plays a role in inorganic carbon-concentration.</text>
</comment>
<comment type="catalytic activity">
    <reaction evidence="1">
        <text>a plastoquinone + NADH + (n+1) H(+)(in) = a plastoquinol + NAD(+) + n H(+)(out)</text>
        <dbReference type="Rhea" id="RHEA:42608"/>
        <dbReference type="Rhea" id="RHEA-COMP:9561"/>
        <dbReference type="Rhea" id="RHEA-COMP:9562"/>
        <dbReference type="ChEBI" id="CHEBI:15378"/>
        <dbReference type="ChEBI" id="CHEBI:17757"/>
        <dbReference type="ChEBI" id="CHEBI:57540"/>
        <dbReference type="ChEBI" id="CHEBI:57945"/>
        <dbReference type="ChEBI" id="CHEBI:62192"/>
    </reaction>
</comment>
<comment type="catalytic activity">
    <reaction evidence="1">
        <text>a plastoquinone + NADPH + (n+1) H(+)(in) = a plastoquinol + NADP(+) + n H(+)(out)</text>
        <dbReference type="Rhea" id="RHEA:42612"/>
        <dbReference type="Rhea" id="RHEA-COMP:9561"/>
        <dbReference type="Rhea" id="RHEA-COMP:9562"/>
        <dbReference type="ChEBI" id="CHEBI:15378"/>
        <dbReference type="ChEBI" id="CHEBI:17757"/>
        <dbReference type="ChEBI" id="CHEBI:57783"/>
        <dbReference type="ChEBI" id="CHEBI:58349"/>
        <dbReference type="ChEBI" id="CHEBI:62192"/>
    </reaction>
</comment>
<comment type="subunit">
    <text evidence="1">NDH-1 can be composed of about 15 different subunits; different subcomplexes with different compositions have been identified which probably have different functions.</text>
</comment>
<comment type="subcellular location">
    <subcellularLocation>
        <location evidence="1">Cellular thylakoid membrane</location>
        <topology evidence="1">Multi-pass membrane protein</topology>
    </subcellularLocation>
</comment>
<comment type="similarity">
    <text evidence="1">Belongs to the complex I NdhL subunit family.</text>
</comment>